<accession>P82162</accession>
<accession>A0A0K9RWE7</accession>
<accession>P82161</accession>
<proteinExistence type="evidence at protein level"/>
<protein>
    <recommendedName>
        <fullName evidence="4">Small ribosomal subunit protein uS10c</fullName>
    </recommendedName>
    <alternativeName>
        <fullName evidence="3">30S ribosomal protein S10 alpha, chloroplastic</fullName>
    </alternativeName>
    <component>
        <recommendedName>
            <fullName evidence="3">30S ribosomal protein S10 beta, chloroplastic</fullName>
        </recommendedName>
    </component>
</protein>
<organism>
    <name type="scientific">Spinacia oleracea</name>
    <name type="common">Spinach</name>
    <dbReference type="NCBI Taxonomy" id="3562"/>
    <lineage>
        <taxon>Eukaryota</taxon>
        <taxon>Viridiplantae</taxon>
        <taxon>Streptophyta</taxon>
        <taxon>Embryophyta</taxon>
        <taxon>Tracheophyta</taxon>
        <taxon>Spermatophyta</taxon>
        <taxon>Magnoliopsida</taxon>
        <taxon>eudicotyledons</taxon>
        <taxon>Gunneridae</taxon>
        <taxon>Pentapetalae</taxon>
        <taxon>Caryophyllales</taxon>
        <taxon>Chenopodiaceae</taxon>
        <taxon>Chenopodioideae</taxon>
        <taxon>Anserineae</taxon>
        <taxon>Spinacia</taxon>
    </lineage>
</organism>
<reference key="1">
    <citation type="journal article" date="2014" name="Nature">
        <title>The genome of the recently domesticated crop plant sugar beet (Beta vulgaris).</title>
        <authorList>
            <person name="Dohm J.C."/>
            <person name="Minoche A.E."/>
            <person name="Holtgraewe D."/>
            <person name="Capella-Gutierrez S."/>
            <person name="Zakrzewski F."/>
            <person name="Tafer H."/>
            <person name="Rupp O."/>
            <person name="Soerensen T.R."/>
            <person name="Stracke R."/>
            <person name="Reinhardt R."/>
            <person name="Goesmann A."/>
            <person name="Kraft T."/>
            <person name="Schulz B."/>
            <person name="Stadler P.F."/>
            <person name="Schmidt T."/>
            <person name="Gabaldon T."/>
            <person name="Lehrach H."/>
            <person name="Weisshaar B."/>
            <person name="Himmelbauer H."/>
        </authorList>
    </citation>
    <scope>NUCLEOTIDE SEQUENCE [LARGE SCALE GENOMIC DNA]</scope>
    <source>
        <strain>cv. Viroflay</strain>
        <tissue>Leaf</tissue>
    </source>
</reference>
<reference key="2">
    <citation type="journal article" date="2000" name="J. Biol. Chem.">
        <title>The plastid ribosomal proteins. Identification of all the proteins in the 30S subunit of an organelle ribosome (chloroplast).</title>
        <authorList>
            <person name="Yamaguchi K."/>
            <person name="von Knoblauch K."/>
            <person name="Subramanian A.R."/>
        </authorList>
    </citation>
    <scope>PROTEIN SEQUENCE OF 60-81</scope>
    <scope>SUBUNIT</scope>
    <scope>SUBCELLULAR LOCATION</scope>
    <source>
        <strain>cv. Alwaro</strain>
        <tissue>Leaf</tissue>
    </source>
</reference>
<reference key="3">
    <citation type="journal article" date="2007" name="Proc. Natl. Acad. Sci. U.S.A.">
        <title>Cryo-EM study of the spinach chloroplast ribosome reveals the structural and functional roles of plastid-specific ribosomal proteins.</title>
        <authorList>
            <person name="Sharma M.R."/>
            <person name="Wilson D.N."/>
            <person name="Datta P.P."/>
            <person name="Barat C."/>
            <person name="Schluenzen F."/>
            <person name="Fucini P."/>
            <person name="Agrawal R.K."/>
        </authorList>
    </citation>
    <scope>STRUCTURE BY ELECTRON MICROSCOPY (9.4 ANGSTROMS)</scope>
</reference>
<reference key="4">
    <citation type="journal article" date="2017" name="EMBO J.">
        <title>The complete structure of the chloroplast 70S ribosome in complex with translation factor pY.</title>
        <authorList>
            <person name="Bieri P."/>
            <person name="Leibundgut M."/>
            <person name="Saurer M."/>
            <person name="Boehringer D."/>
            <person name="Ban N."/>
        </authorList>
    </citation>
    <scope>STRUCTURE BY ELECTRON MICROSCOPY (3.40 ANGSTROMS)</scope>
    <scope>SUBUNIT</scope>
    <scope>SUBCELLULAR LOCATION</scope>
</reference>
<gene>
    <name type="primary">RPS10</name>
    <name type="ORF">SOVF_026730</name>
</gene>
<keyword id="KW-0002">3D-structure</keyword>
<keyword id="KW-0150">Chloroplast</keyword>
<keyword id="KW-0903">Direct protein sequencing</keyword>
<keyword id="KW-0934">Plastid</keyword>
<keyword id="KW-1185">Reference proteome</keyword>
<keyword id="KW-0687">Ribonucleoprotein</keyword>
<keyword id="KW-0689">Ribosomal protein</keyword>
<keyword id="KW-0809">Transit peptide</keyword>
<sequence length="195" mass="21414">MATSSISAALLSPLTLRNASSSSTKQDFSTLSSLNLRRTLTPTLQSGHTLSNSSNFATFAAPGALEVLETSPDSFEDGSETSKISIAADSDQMAPKQKIRIKLRSYWVPLIEDSCKQIMDAARTTNAKIMGPVPLPTKKRIYCVLKSPHVHKDARFHFEIRTHQRLIDILYPTAQTIDSLMQLDLPAGVDVEVKL</sequence>
<feature type="transit peptide" description="Chloroplast" evidence="1">
    <location>
        <begin position="1"/>
        <end position="59"/>
    </location>
</feature>
<feature type="chain" id="PRO_0000249417" description="Small ribosomal subunit protein uS10c">
    <location>
        <begin position="60"/>
        <end position="195"/>
    </location>
</feature>
<feature type="chain" id="PRO_0000249418" description="30S ribosomal protein S10 beta, chloroplastic">
    <location>
        <begin position="63"/>
        <end position="195"/>
    </location>
</feature>
<evidence type="ECO:0000269" key="1">
    <source>
    </source>
</evidence>
<evidence type="ECO:0000269" key="2">
    <source>
    </source>
</evidence>
<evidence type="ECO:0000303" key="3">
    <source>
    </source>
</evidence>
<evidence type="ECO:0000303" key="4">
    <source>
    </source>
</evidence>
<evidence type="ECO:0000305" key="5">
    <source>
    </source>
</evidence>
<evidence type="ECO:0000305" key="6">
    <source>
    </source>
</evidence>
<dbReference type="EMBL" id="KQ134529">
    <property type="protein sequence ID" value="KNA23234.1"/>
    <property type="molecule type" value="Genomic_DNA"/>
</dbReference>
<dbReference type="PDB" id="4V61">
    <property type="method" value="EM"/>
    <property type="resolution" value="9.40 A"/>
    <property type="chains" value="J=60-81"/>
</dbReference>
<dbReference type="PDB" id="5MMJ">
    <property type="method" value="EM"/>
    <property type="resolution" value="3.65 A"/>
    <property type="chains" value="j=1-195"/>
</dbReference>
<dbReference type="PDB" id="5MMM">
    <property type="method" value="EM"/>
    <property type="resolution" value="3.40 A"/>
    <property type="chains" value="j=1-195"/>
</dbReference>
<dbReference type="PDB" id="5X8P">
    <property type="method" value="EM"/>
    <property type="resolution" value="3.40 A"/>
    <property type="chains" value="j=74-195"/>
</dbReference>
<dbReference type="PDB" id="5X8R">
    <property type="method" value="EM"/>
    <property type="resolution" value="3.70 A"/>
    <property type="chains" value="j=74-195"/>
</dbReference>
<dbReference type="PDB" id="6ERI">
    <property type="method" value="EM"/>
    <property type="resolution" value="3.00 A"/>
    <property type="chains" value="BJ=98-195"/>
</dbReference>
<dbReference type="PDBsum" id="4V61"/>
<dbReference type="PDBsum" id="5MMJ"/>
<dbReference type="PDBsum" id="5MMM"/>
<dbReference type="PDBsum" id="5X8P"/>
<dbReference type="PDBsum" id="5X8R"/>
<dbReference type="PDBsum" id="6ERI"/>
<dbReference type="EMDB" id="EMD-3532"/>
<dbReference type="EMDB" id="EMD-3533"/>
<dbReference type="EMDB" id="EMD-3941"/>
<dbReference type="EMDB" id="EMD-6709"/>
<dbReference type="EMDB" id="EMD-6710"/>
<dbReference type="SMR" id="P82162"/>
<dbReference type="STRING" id="3562.P82162"/>
<dbReference type="OrthoDB" id="366214at2759"/>
<dbReference type="Proteomes" id="UP001155700">
    <property type="component" value="Unplaced"/>
</dbReference>
<dbReference type="GO" id="GO:0009507">
    <property type="term" value="C:chloroplast"/>
    <property type="evidence" value="ECO:0007669"/>
    <property type="project" value="UniProtKB-SubCell"/>
</dbReference>
<dbReference type="GO" id="GO:0005739">
    <property type="term" value="C:mitochondrion"/>
    <property type="evidence" value="ECO:0000318"/>
    <property type="project" value="GO_Central"/>
</dbReference>
<dbReference type="GO" id="GO:0015935">
    <property type="term" value="C:small ribosomal subunit"/>
    <property type="evidence" value="ECO:0000318"/>
    <property type="project" value="GO_Central"/>
</dbReference>
<dbReference type="GO" id="GO:0003723">
    <property type="term" value="F:RNA binding"/>
    <property type="evidence" value="ECO:0007669"/>
    <property type="project" value="InterPro"/>
</dbReference>
<dbReference type="GO" id="GO:0003735">
    <property type="term" value="F:structural constituent of ribosome"/>
    <property type="evidence" value="ECO:0000318"/>
    <property type="project" value="GO_Central"/>
</dbReference>
<dbReference type="GO" id="GO:0006412">
    <property type="term" value="P:translation"/>
    <property type="evidence" value="ECO:0007669"/>
    <property type="project" value="InterPro"/>
</dbReference>
<dbReference type="FunFam" id="3.30.70.600:FF:000001">
    <property type="entry name" value="30S ribosomal protein S10"/>
    <property type="match status" value="1"/>
</dbReference>
<dbReference type="Gene3D" id="3.30.70.600">
    <property type="entry name" value="Ribosomal protein S10 domain"/>
    <property type="match status" value="1"/>
</dbReference>
<dbReference type="HAMAP" id="MF_00508">
    <property type="entry name" value="Ribosomal_uS10"/>
    <property type="match status" value="1"/>
</dbReference>
<dbReference type="InterPro" id="IPR001848">
    <property type="entry name" value="Ribosomal_uS10"/>
</dbReference>
<dbReference type="InterPro" id="IPR018268">
    <property type="entry name" value="Ribosomal_uS10_CS"/>
</dbReference>
<dbReference type="InterPro" id="IPR027486">
    <property type="entry name" value="Ribosomal_uS10_dom"/>
</dbReference>
<dbReference type="InterPro" id="IPR036838">
    <property type="entry name" value="Ribosomal_uS10_dom_sf"/>
</dbReference>
<dbReference type="NCBIfam" id="NF001861">
    <property type="entry name" value="PRK00596.1"/>
    <property type="match status" value="1"/>
</dbReference>
<dbReference type="NCBIfam" id="TIGR01049">
    <property type="entry name" value="rpsJ_bact"/>
    <property type="match status" value="1"/>
</dbReference>
<dbReference type="PANTHER" id="PTHR11700">
    <property type="entry name" value="30S RIBOSOMAL PROTEIN S10 FAMILY MEMBER"/>
    <property type="match status" value="1"/>
</dbReference>
<dbReference type="Pfam" id="PF00338">
    <property type="entry name" value="Ribosomal_S10"/>
    <property type="match status" value="1"/>
</dbReference>
<dbReference type="PRINTS" id="PR00971">
    <property type="entry name" value="RIBOSOMALS10"/>
</dbReference>
<dbReference type="SMART" id="SM01403">
    <property type="entry name" value="Ribosomal_S10"/>
    <property type="match status" value="1"/>
</dbReference>
<dbReference type="SUPFAM" id="SSF54999">
    <property type="entry name" value="Ribosomal protein S10"/>
    <property type="match status" value="1"/>
</dbReference>
<dbReference type="PROSITE" id="PS00361">
    <property type="entry name" value="RIBOSOMAL_S10"/>
    <property type="match status" value="1"/>
</dbReference>
<comment type="function">
    <text evidence="5 6">Component of the chloroplast ribosome (chloro-ribosome), a dedicated translation machinery responsible for the synthesis of chloroplast genome-encoded proteins, including proteins of the transcription and translation machinery and components of the photosynthetic apparatus.</text>
</comment>
<comment type="subunit">
    <text evidence="1 2">Component of the chloroplast small ribosomal subunit (SSU). Mature 70S chloroplast ribosomes of higher plants consist of a small (30S) and a large (50S) subunit. The 30S small subunit contains 1 molecule of ribosomal RNA (16S rRNA) and 24 different proteins. The 50S large subunit contains 3 rRNA molecules (23S, 5S and 4.5S rRNA) and 33 different proteins.</text>
</comment>
<comment type="subcellular location">
    <subcellularLocation>
        <location evidence="1 2">Plastid</location>
        <location evidence="1 2">Chloroplast</location>
    </subcellularLocation>
</comment>
<comment type="miscellaneous">
    <text>2 different forms exist, S10 alpha and S10 beta, possibly due to different transit peptide cleavage.</text>
</comment>
<comment type="similarity">
    <text evidence="1">Belongs to the universal ribosomal protein uS10 family.</text>
</comment>
<name>RR10_SPIOL</name>